<accession>B7NT37</accession>
<keyword id="KW-0067">ATP-binding</keyword>
<keyword id="KW-0436">Ligase</keyword>
<keyword id="KW-0460">Magnesium</keyword>
<keyword id="KW-0479">Metal-binding</keyword>
<keyword id="KW-0520">NAD</keyword>
<keyword id="KW-0547">Nucleotide-binding</keyword>
<evidence type="ECO:0000255" key="1">
    <source>
        <dbReference type="HAMAP-Rule" id="MF_00193"/>
    </source>
</evidence>
<feature type="chain" id="PRO_1000118618" description="NH(3)-dependent NAD(+) synthetase">
    <location>
        <begin position="1"/>
        <end position="275"/>
    </location>
</feature>
<feature type="binding site" evidence="1">
    <location>
        <begin position="46"/>
        <end position="53"/>
    </location>
    <ligand>
        <name>ATP</name>
        <dbReference type="ChEBI" id="CHEBI:30616"/>
    </ligand>
</feature>
<feature type="binding site" evidence="1">
    <location>
        <position position="52"/>
    </location>
    <ligand>
        <name>Mg(2+)</name>
        <dbReference type="ChEBI" id="CHEBI:18420"/>
    </ligand>
</feature>
<feature type="binding site" evidence="1">
    <location>
        <position position="140"/>
    </location>
    <ligand>
        <name>deamido-NAD(+)</name>
        <dbReference type="ChEBI" id="CHEBI:58437"/>
    </ligand>
</feature>
<feature type="binding site" evidence="1">
    <location>
        <position position="160"/>
    </location>
    <ligand>
        <name>ATP</name>
        <dbReference type="ChEBI" id="CHEBI:30616"/>
    </ligand>
</feature>
<feature type="binding site" evidence="1">
    <location>
        <position position="165"/>
    </location>
    <ligand>
        <name>Mg(2+)</name>
        <dbReference type="ChEBI" id="CHEBI:18420"/>
    </ligand>
</feature>
<feature type="binding site" evidence="1">
    <location>
        <position position="173"/>
    </location>
    <ligand>
        <name>deamido-NAD(+)</name>
        <dbReference type="ChEBI" id="CHEBI:58437"/>
    </ligand>
</feature>
<feature type="binding site" evidence="1">
    <location>
        <position position="180"/>
    </location>
    <ligand>
        <name>deamido-NAD(+)</name>
        <dbReference type="ChEBI" id="CHEBI:58437"/>
    </ligand>
</feature>
<feature type="binding site" evidence="1">
    <location>
        <position position="189"/>
    </location>
    <ligand>
        <name>ATP</name>
        <dbReference type="ChEBI" id="CHEBI:30616"/>
    </ligand>
</feature>
<feature type="binding site" evidence="1">
    <location>
        <position position="211"/>
    </location>
    <ligand>
        <name>ATP</name>
        <dbReference type="ChEBI" id="CHEBI:30616"/>
    </ligand>
</feature>
<feature type="binding site" evidence="1">
    <location>
        <begin position="260"/>
        <end position="261"/>
    </location>
    <ligand>
        <name>deamido-NAD(+)</name>
        <dbReference type="ChEBI" id="CHEBI:58437"/>
    </ligand>
</feature>
<comment type="function">
    <text evidence="1">Catalyzes the ATP-dependent amidation of deamido-NAD to form NAD. Uses ammonia as a nitrogen source.</text>
</comment>
<comment type="catalytic activity">
    <reaction evidence="1">
        <text>deamido-NAD(+) + NH4(+) + ATP = AMP + diphosphate + NAD(+) + H(+)</text>
        <dbReference type="Rhea" id="RHEA:21188"/>
        <dbReference type="ChEBI" id="CHEBI:15378"/>
        <dbReference type="ChEBI" id="CHEBI:28938"/>
        <dbReference type="ChEBI" id="CHEBI:30616"/>
        <dbReference type="ChEBI" id="CHEBI:33019"/>
        <dbReference type="ChEBI" id="CHEBI:57540"/>
        <dbReference type="ChEBI" id="CHEBI:58437"/>
        <dbReference type="ChEBI" id="CHEBI:456215"/>
        <dbReference type="EC" id="6.3.1.5"/>
    </reaction>
</comment>
<comment type="pathway">
    <text evidence="1">Cofactor biosynthesis; NAD(+) biosynthesis; NAD(+) from deamido-NAD(+) (ammonia route): step 1/1.</text>
</comment>
<comment type="subunit">
    <text evidence="1">Homodimer.</text>
</comment>
<comment type="similarity">
    <text evidence="1">Belongs to the NAD synthetase family.</text>
</comment>
<organism>
    <name type="scientific">Escherichia coli O7:K1 (strain IAI39 / ExPEC)</name>
    <dbReference type="NCBI Taxonomy" id="585057"/>
    <lineage>
        <taxon>Bacteria</taxon>
        <taxon>Pseudomonadati</taxon>
        <taxon>Pseudomonadota</taxon>
        <taxon>Gammaproteobacteria</taxon>
        <taxon>Enterobacterales</taxon>
        <taxon>Enterobacteriaceae</taxon>
        <taxon>Escherichia</taxon>
    </lineage>
</organism>
<protein>
    <recommendedName>
        <fullName evidence="1">NH(3)-dependent NAD(+) synthetase</fullName>
        <ecNumber evidence="1">6.3.1.5</ecNumber>
    </recommendedName>
</protein>
<gene>
    <name evidence="1" type="primary">nadE</name>
    <name type="ordered locus">ECIAI39_1314</name>
</gene>
<sequence>MTLQQQIIKALGAKPQINAEEEIRRSVDFLKSYLQTYPFIKSLVLGISGGQDSTLAGKLCQMAINELRQETGNESLQFIAVRLPYGVQADEQDCQDAIAFIQPDRVLTVNIKGAVLASEQALREAGIELSDFVRGNEKARERMKAQYSIAGMTSGVVVGTDHAAEAITGFFTKYGDGGTDINPLYRLNKRQGKQLLAALGCPEHLYKKAPTADLEDDRPSLPDEVALGVTYDNIDDYLEGKNVPEQVARTIENWYLKTEHKRRPPITVFDDFWKK</sequence>
<name>NADE_ECO7I</name>
<dbReference type="EC" id="6.3.1.5" evidence="1"/>
<dbReference type="EMBL" id="CU928164">
    <property type="protein sequence ID" value="CAR17448.1"/>
    <property type="molecule type" value="Genomic_DNA"/>
</dbReference>
<dbReference type="RefSeq" id="WP_000175037.1">
    <property type="nucleotide sequence ID" value="NC_011750.1"/>
</dbReference>
<dbReference type="RefSeq" id="YP_002407322.1">
    <property type="nucleotide sequence ID" value="NC_011750.1"/>
</dbReference>
<dbReference type="SMR" id="B7NT37"/>
<dbReference type="STRING" id="585057.ECIAI39_1314"/>
<dbReference type="KEGG" id="ect:ECIAI39_1314"/>
<dbReference type="PATRIC" id="fig|585057.6.peg.1376"/>
<dbReference type="HOGENOM" id="CLU_059327_3_0_6"/>
<dbReference type="UniPathway" id="UPA00253">
    <property type="reaction ID" value="UER00333"/>
</dbReference>
<dbReference type="Proteomes" id="UP000000749">
    <property type="component" value="Chromosome"/>
</dbReference>
<dbReference type="GO" id="GO:0005737">
    <property type="term" value="C:cytoplasm"/>
    <property type="evidence" value="ECO:0007669"/>
    <property type="project" value="InterPro"/>
</dbReference>
<dbReference type="GO" id="GO:0005524">
    <property type="term" value="F:ATP binding"/>
    <property type="evidence" value="ECO:0007669"/>
    <property type="project" value="UniProtKB-UniRule"/>
</dbReference>
<dbReference type="GO" id="GO:0004359">
    <property type="term" value="F:glutaminase activity"/>
    <property type="evidence" value="ECO:0007669"/>
    <property type="project" value="InterPro"/>
</dbReference>
<dbReference type="GO" id="GO:0046872">
    <property type="term" value="F:metal ion binding"/>
    <property type="evidence" value="ECO:0007669"/>
    <property type="project" value="UniProtKB-KW"/>
</dbReference>
<dbReference type="GO" id="GO:0003952">
    <property type="term" value="F:NAD+ synthase (glutamine-hydrolyzing) activity"/>
    <property type="evidence" value="ECO:0007669"/>
    <property type="project" value="InterPro"/>
</dbReference>
<dbReference type="GO" id="GO:0008795">
    <property type="term" value="F:NAD+ synthase activity"/>
    <property type="evidence" value="ECO:0007669"/>
    <property type="project" value="UniProtKB-UniRule"/>
</dbReference>
<dbReference type="GO" id="GO:0009435">
    <property type="term" value="P:NAD biosynthetic process"/>
    <property type="evidence" value="ECO:0007669"/>
    <property type="project" value="UniProtKB-UniRule"/>
</dbReference>
<dbReference type="CDD" id="cd00553">
    <property type="entry name" value="NAD_synthase"/>
    <property type="match status" value="1"/>
</dbReference>
<dbReference type="FunFam" id="3.40.50.620:FF:000015">
    <property type="entry name" value="NH(3)-dependent NAD(+) synthetase"/>
    <property type="match status" value="1"/>
</dbReference>
<dbReference type="Gene3D" id="3.40.50.620">
    <property type="entry name" value="HUPs"/>
    <property type="match status" value="1"/>
</dbReference>
<dbReference type="HAMAP" id="MF_00193">
    <property type="entry name" value="NadE_ammonia_dep"/>
    <property type="match status" value="1"/>
</dbReference>
<dbReference type="InterPro" id="IPR022310">
    <property type="entry name" value="NAD/GMP_synthase"/>
</dbReference>
<dbReference type="InterPro" id="IPR003694">
    <property type="entry name" value="NAD_synthase"/>
</dbReference>
<dbReference type="InterPro" id="IPR022926">
    <property type="entry name" value="NH(3)-dep_NAD(+)_synth"/>
</dbReference>
<dbReference type="InterPro" id="IPR014729">
    <property type="entry name" value="Rossmann-like_a/b/a_fold"/>
</dbReference>
<dbReference type="NCBIfam" id="TIGR00552">
    <property type="entry name" value="nadE"/>
    <property type="match status" value="1"/>
</dbReference>
<dbReference type="NCBIfam" id="NF001979">
    <property type="entry name" value="PRK00768.1"/>
    <property type="match status" value="1"/>
</dbReference>
<dbReference type="PANTHER" id="PTHR23090">
    <property type="entry name" value="NH 3 /GLUTAMINE-DEPENDENT NAD + SYNTHETASE"/>
    <property type="match status" value="1"/>
</dbReference>
<dbReference type="PANTHER" id="PTHR23090:SF7">
    <property type="entry name" value="NH(3)-DEPENDENT NAD(+) SYNTHETASE"/>
    <property type="match status" value="1"/>
</dbReference>
<dbReference type="Pfam" id="PF02540">
    <property type="entry name" value="NAD_synthase"/>
    <property type="match status" value="1"/>
</dbReference>
<dbReference type="SUPFAM" id="SSF52402">
    <property type="entry name" value="Adenine nucleotide alpha hydrolases-like"/>
    <property type="match status" value="1"/>
</dbReference>
<reference key="1">
    <citation type="journal article" date="2009" name="PLoS Genet.">
        <title>Organised genome dynamics in the Escherichia coli species results in highly diverse adaptive paths.</title>
        <authorList>
            <person name="Touchon M."/>
            <person name="Hoede C."/>
            <person name="Tenaillon O."/>
            <person name="Barbe V."/>
            <person name="Baeriswyl S."/>
            <person name="Bidet P."/>
            <person name="Bingen E."/>
            <person name="Bonacorsi S."/>
            <person name="Bouchier C."/>
            <person name="Bouvet O."/>
            <person name="Calteau A."/>
            <person name="Chiapello H."/>
            <person name="Clermont O."/>
            <person name="Cruveiller S."/>
            <person name="Danchin A."/>
            <person name="Diard M."/>
            <person name="Dossat C."/>
            <person name="Karoui M.E."/>
            <person name="Frapy E."/>
            <person name="Garry L."/>
            <person name="Ghigo J.M."/>
            <person name="Gilles A.M."/>
            <person name="Johnson J."/>
            <person name="Le Bouguenec C."/>
            <person name="Lescat M."/>
            <person name="Mangenot S."/>
            <person name="Martinez-Jehanne V."/>
            <person name="Matic I."/>
            <person name="Nassif X."/>
            <person name="Oztas S."/>
            <person name="Petit M.A."/>
            <person name="Pichon C."/>
            <person name="Rouy Z."/>
            <person name="Ruf C.S."/>
            <person name="Schneider D."/>
            <person name="Tourret J."/>
            <person name="Vacherie B."/>
            <person name="Vallenet D."/>
            <person name="Medigue C."/>
            <person name="Rocha E.P.C."/>
            <person name="Denamur E."/>
        </authorList>
    </citation>
    <scope>NUCLEOTIDE SEQUENCE [LARGE SCALE GENOMIC DNA]</scope>
    <source>
        <strain>IAI39 / ExPEC</strain>
    </source>
</reference>
<proteinExistence type="inferred from homology"/>